<gene>
    <name evidence="1" type="primary">dnaJ</name>
    <name type="ordered locus">EUBELI_01359</name>
</gene>
<protein>
    <recommendedName>
        <fullName evidence="1">Chaperone protein DnaJ</fullName>
    </recommendedName>
</protein>
<reference key="1">
    <citation type="journal article" date="2009" name="Proc. Natl. Acad. Sci. U.S.A.">
        <title>Characterizing a model human gut microbiota composed of members of its two dominant bacterial phyla.</title>
        <authorList>
            <person name="Mahowald M.A."/>
            <person name="Rey F.E."/>
            <person name="Seedorf H."/>
            <person name="Turnbaugh P.J."/>
            <person name="Fulton R.S."/>
            <person name="Wollam A."/>
            <person name="Shah N."/>
            <person name="Wang C."/>
            <person name="Magrini V."/>
            <person name="Wilson R.K."/>
            <person name="Cantarel B.L."/>
            <person name="Coutinho P.M."/>
            <person name="Henrissat B."/>
            <person name="Crock L.W."/>
            <person name="Russell A."/>
            <person name="Verberkmoes N.C."/>
            <person name="Hettich R.L."/>
            <person name="Gordon J.I."/>
        </authorList>
    </citation>
    <scope>NUCLEOTIDE SEQUENCE [LARGE SCALE GENOMIC DNA]</scope>
    <source>
        <strain>ATCC 27750 / DSM 3376 / VPI C15-48 / C15-B4</strain>
    </source>
</reference>
<accession>C4Z1J3</accession>
<comment type="function">
    <text evidence="1">Participates actively in the response to hyperosmotic and heat shock by preventing the aggregation of stress-denatured proteins and by disaggregating proteins, also in an autonomous, DnaK-independent fashion. Unfolded proteins bind initially to DnaJ; upon interaction with the DnaJ-bound protein, DnaK hydrolyzes its bound ATP, resulting in the formation of a stable complex. GrpE releases ADP from DnaK; ATP binding to DnaK triggers the release of the substrate protein, thus completing the reaction cycle. Several rounds of ATP-dependent interactions between DnaJ, DnaK and GrpE are required for fully efficient folding. Also involved, together with DnaK and GrpE, in the DNA replication of plasmids through activation of initiation proteins.</text>
</comment>
<comment type="cofactor">
    <cofactor evidence="1">
        <name>Zn(2+)</name>
        <dbReference type="ChEBI" id="CHEBI:29105"/>
    </cofactor>
    <text evidence="1">Binds 2 Zn(2+) ions per monomer.</text>
</comment>
<comment type="subunit">
    <text evidence="1">Homodimer.</text>
</comment>
<comment type="subcellular location">
    <subcellularLocation>
        <location evidence="1">Cytoplasm</location>
    </subcellularLocation>
</comment>
<comment type="domain">
    <text evidence="1">The J domain is necessary and sufficient to stimulate DnaK ATPase activity. Zinc center 1 plays an important role in the autonomous, DnaK-independent chaperone activity of DnaJ. Zinc center 2 is essential for interaction with DnaK and for DnaJ activity.</text>
</comment>
<comment type="similarity">
    <text evidence="1">Belongs to the DnaJ family.</text>
</comment>
<feature type="chain" id="PRO_1000213682" description="Chaperone protein DnaJ">
    <location>
        <begin position="1"/>
        <end position="375"/>
    </location>
</feature>
<feature type="domain" description="J" evidence="1">
    <location>
        <begin position="6"/>
        <end position="71"/>
    </location>
</feature>
<feature type="repeat" description="CXXCXGXG motif">
    <location>
        <begin position="151"/>
        <end position="158"/>
    </location>
</feature>
<feature type="repeat" description="CXXCXGXG motif">
    <location>
        <begin position="168"/>
        <end position="175"/>
    </location>
</feature>
<feature type="repeat" description="CXXCXGXG motif">
    <location>
        <begin position="194"/>
        <end position="201"/>
    </location>
</feature>
<feature type="repeat" description="CXXCXGXG motif">
    <location>
        <begin position="208"/>
        <end position="215"/>
    </location>
</feature>
<feature type="zinc finger region" description="CR-type" evidence="1">
    <location>
        <begin position="138"/>
        <end position="220"/>
    </location>
</feature>
<feature type="binding site" evidence="1">
    <location>
        <position position="151"/>
    </location>
    <ligand>
        <name>Zn(2+)</name>
        <dbReference type="ChEBI" id="CHEBI:29105"/>
        <label>1</label>
    </ligand>
</feature>
<feature type="binding site" evidence="1">
    <location>
        <position position="154"/>
    </location>
    <ligand>
        <name>Zn(2+)</name>
        <dbReference type="ChEBI" id="CHEBI:29105"/>
        <label>1</label>
    </ligand>
</feature>
<feature type="binding site" evidence="1">
    <location>
        <position position="168"/>
    </location>
    <ligand>
        <name>Zn(2+)</name>
        <dbReference type="ChEBI" id="CHEBI:29105"/>
        <label>2</label>
    </ligand>
</feature>
<feature type="binding site" evidence="1">
    <location>
        <position position="171"/>
    </location>
    <ligand>
        <name>Zn(2+)</name>
        <dbReference type="ChEBI" id="CHEBI:29105"/>
        <label>2</label>
    </ligand>
</feature>
<feature type="binding site" evidence="1">
    <location>
        <position position="194"/>
    </location>
    <ligand>
        <name>Zn(2+)</name>
        <dbReference type="ChEBI" id="CHEBI:29105"/>
        <label>2</label>
    </ligand>
</feature>
<feature type="binding site" evidence="1">
    <location>
        <position position="197"/>
    </location>
    <ligand>
        <name>Zn(2+)</name>
        <dbReference type="ChEBI" id="CHEBI:29105"/>
        <label>2</label>
    </ligand>
</feature>
<feature type="binding site" evidence="1">
    <location>
        <position position="208"/>
    </location>
    <ligand>
        <name>Zn(2+)</name>
        <dbReference type="ChEBI" id="CHEBI:29105"/>
        <label>1</label>
    </ligand>
</feature>
<feature type="binding site" evidence="1">
    <location>
        <position position="211"/>
    </location>
    <ligand>
        <name>Zn(2+)</name>
        <dbReference type="ChEBI" id="CHEBI:29105"/>
        <label>1</label>
    </ligand>
</feature>
<sequence>MADKRDYYEVLGVPKDADDAAIKKAYRQLAKKYHPDMNPGDKEAEIKFKEASEAYAVLSDAEKRRQYDQFGHAAFEGGAGGAGAGGFDFDFGDMGDIFGDLFGGMFGGGGSRRNSNGPRRGADVRVNVRITFDESVRGTTKKIDVTLKDECSSCHGTGAKPGTSPETCSKCGGRGQVTFTQQSFLGMVRSQQPCPDCHGTGKIIKEKCPDCYGTGYISSKKTIEVNIPAGIDNGQCVRIQGKGEPGVNGGPRGDLLVAVIISASTEFERDGYNIFSNVVISYPTAVLGGEIKVKTVDGEVLYEVKPGTASGTRVRLKGKGMPSVRNAAQRGDHYITLIVDIPTKLNQEQKDALMAYEKALTGNERHGKKKGLFGK</sequence>
<name>DNAJ_LACE2</name>
<evidence type="ECO:0000255" key="1">
    <source>
        <dbReference type="HAMAP-Rule" id="MF_01152"/>
    </source>
</evidence>
<organism>
    <name type="scientific">Lachnospira eligens (strain ATCC 27750 / DSM 3376 / VPI C15-48 / C15-B4)</name>
    <name type="common">Eubacterium eligens</name>
    <dbReference type="NCBI Taxonomy" id="515620"/>
    <lineage>
        <taxon>Bacteria</taxon>
        <taxon>Bacillati</taxon>
        <taxon>Bacillota</taxon>
        <taxon>Clostridia</taxon>
        <taxon>Lachnospirales</taxon>
        <taxon>Lachnospiraceae</taxon>
        <taxon>Lachnospira</taxon>
    </lineage>
</organism>
<proteinExistence type="inferred from homology"/>
<dbReference type="EMBL" id="CP001104">
    <property type="protein sequence ID" value="ACR72354.1"/>
    <property type="molecule type" value="Genomic_DNA"/>
</dbReference>
<dbReference type="RefSeq" id="WP_012739589.1">
    <property type="nucleotide sequence ID" value="NC_012778.1"/>
</dbReference>
<dbReference type="SMR" id="C4Z1J3"/>
<dbReference type="STRING" id="515620.EUBELI_01359"/>
<dbReference type="GeneID" id="41356067"/>
<dbReference type="KEGG" id="eel:EUBELI_01359"/>
<dbReference type="eggNOG" id="COG0484">
    <property type="taxonomic scope" value="Bacteria"/>
</dbReference>
<dbReference type="HOGENOM" id="CLU_017633_0_7_9"/>
<dbReference type="Proteomes" id="UP000001476">
    <property type="component" value="Chromosome"/>
</dbReference>
<dbReference type="GO" id="GO:0005737">
    <property type="term" value="C:cytoplasm"/>
    <property type="evidence" value="ECO:0007669"/>
    <property type="project" value="UniProtKB-SubCell"/>
</dbReference>
<dbReference type="GO" id="GO:0005524">
    <property type="term" value="F:ATP binding"/>
    <property type="evidence" value="ECO:0007669"/>
    <property type="project" value="InterPro"/>
</dbReference>
<dbReference type="GO" id="GO:0031072">
    <property type="term" value="F:heat shock protein binding"/>
    <property type="evidence" value="ECO:0007669"/>
    <property type="project" value="InterPro"/>
</dbReference>
<dbReference type="GO" id="GO:0051082">
    <property type="term" value="F:unfolded protein binding"/>
    <property type="evidence" value="ECO:0007669"/>
    <property type="project" value="UniProtKB-UniRule"/>
</dbReference>
<dbReference type="GO" id="GO:0008270">
    <property type="term" value="F:zinc ion binding"/>
    <property type="evidence" value="ECO:0007669"/>
    <property type="project" value="UniProtKB-UniRule"/>
</dbReference>
<dbReference type="GO" id="GO:0051085">
    <property type="term" value="P:chaperone cofactor-dependent protein refolding"/>
    <property type="evidence" value="ECO:0007669"/>
    <property type="project" value="TreeGrafter"/>
</dbReference>
<dbReference type="GO" id="GO:0006260">
    <property type="term" value="P:DNA replication"/>
    <property type="evidence" value="ECO:0007669"/>
    <property type="project" value="UniProtKB-KW"/>
</dbReference>
<dbReference type="GO" id="GO:0042026">
    <property type="term" value="P:protein refolding"/>
    <property type="evidence" value="ECO:0007669"/>
    <property type="project" value="TreeGrafter"/>
</dbReference>
<dbReference type="GO" id="GO:0009408">
    <property type="term" value="P:response to heat"/>
    <property type="evidence" value="ECO:0007669"/>
    <property type="project" value="InterPro"/>
</dbReference>
<dbReference type="CDD" id="cd06257">
    <property type="entry name" value="DnaJ"/>
    <property type="match status" value="1"/>
</dbReference>
<dbReference type="CDD" id="cd10747">
    <property type="entry name" value="DnaJ_C"/>
    <property type="match status" value="1"/>
</dbReference>
<dbReference type="CDD" id="cd10719">
    <property type="entry name" value="DnaJ_zf"/>
    <property type="match status" value="1"/>
</dbReference>
<dbReference type="FunFam" id="1.10.287.110:FF:000034">
    <property type="entry name" value="Chaperone protein DnaJ"/>
    <property type="match status" value="1"/>
</dbReference>
<dbReference type="FunFam" id="2.60.260.20:FF:000005">
    <property type="entry name" value="Chaperone protein dnaJ 1, mitochondrial"/>
    <property type="match status" value="1"/>
</dbReference>
<dbReference type="Gene3D" id="6.20.20.10">
    <property type="match status" value="2"/>
</dbReference>
<dbReference type="Gene3D" id="1.10.287.110">
    <property type="entry name" value="DnaJ domain"/>
    <property type="match status" value="1"/>
</dbReference>
<dbReference type="Gene3D" id="2.60.260.20">
    <property type="entry name" value="Urease metallochaperone UreE, N-terminal domain"/>
    <property type="match status" value="2"/>
</dbReference>
<dbReference type="HAMAP" id="MF_01152">
    <property type="entry name" value="DnaJ"/>
    <property type="match status" value="1"/>
</dbReference>
<dbReference type="InterPro" id="IPR012724">
    <property type="entry name" value="DnaJ"/>
</dbReference>
<dbReference type="InterPro" id="IPR002939">
    <property type="entry name" value="DnaJ_C"/>
</dbReference>
<dbReference type="InterPro" id="IPR001623">
    <property type="entry name" value="DnaJ_domain"/>
</dbReference>
<dbReference type="InterPro" id="IPR018253">
    <property type="entry name" value="DnaJ_domain_CS"/>
</dbReference>
<dbReference type="InterPro" id="IPR008971">
    <property type="entry name" value="HSP40/DnaJ_pept-bd"/>
</dbReference>
<dbReference type="InterPro" id="IPR001305">
    <property type="entry name" value="HSP_DnaJ_Cys-rich_dom"/>
</dbReference>
<dbReference type="InterPro" id="IPR036410">
    <property type="entry name" value="HSP_DnaJ_Cys-rich_dom_sf"/>
</dbReference>
<dbReference type="InterPro" id="IPR036869">
    <property type="entry name" value="J_dom_sf"/>
</dbReference>
<dbReference type="NCBIfam" id="TIGR02349">
    <property type="entry name" value="DnaJ_bact"/>
    <property type="match status" value="1"/>
</dbReference>
<dbReference type="NCBIfam" id="NF008035">
    <property type="entry name" value="PRK10767.1"/>
    <property type="match status" value="1"/>
</dbReference>
<dbReference type="PANTHER" id="PTHR43096">
    <property type="entry name" value="DNAJ HOMOLOG 1, MITOCHONDRIAL-RELATED"/>
    <property type="match status" value="1"/>
</dbReference>
<dbReference type="PANTHER" id="PTHR43096:SF52">
    <property type="entry name" value="DNAJ HOMOLOG 1, MITOCHONDRIAL-RELATED"/>
    <property type="match status" value="1"/>
</dbReference>
<dbReference type="Pfam" id="PF00226">
    <property type="entry name" value="DnaJ"/>
    <property type="match status" value="1"/>
</dbReference>
<dbReference type="Pfam" id="PF01556">
    <property type="entry name" value="DnaJ_C"/>
    <property type="match status" value="1"/>
</dbReference>
<dbReference type="Pfam" id="PF00684">
    <property type="entry name" value="DnaJ_CXXCXGXG"/>
    <property type="match status" value="1"/>
</dbReference>
<dbReference type="PRINTS" id="PR00625">
    <property type="entry name" value="JDOMAIN"/>
</dbReference>
<dbReference type="SMART" id="SM00271">
    <property type="entry name" value="DnaJ"/>
    <property type="match status" value="1"/>
</dbReference>
<dbReference type="SUPFAM" id="SSF46565">
    <property type="entry name" value="Chaperone J-domain"/>
    <property type="match status" value="1"/>
</dbReference>
<dbReference type="SUPFAM" id="SSF57938">
    <property type="entry name" value="DnaJ/Hsp40 cysteine-rich domain"/>
    <property type="match status" value="1"/>
</dbReference>
<dbReference type="SUPFAM" id="SSF49493">
    <property type="entry name" value="HSP40/DnaJ peptide-binding domain"/>
    <property type="match status" value="2"/>
</dbReference>
<dbReference type="PROSITE" id="PS00636">
    <property type="entry name" value="DNAJ_1"/>
    <property type="match status" value="1"/>
</dbReference>
<dbReference type="PROSITE" id="PS50076">
    <property type="entry name" value="DNAJ_2"/>
    <property type="match status" value="1"/>
</dbReference>
<dbReference type="PROSITE" id="PS51188">
    <property type="entry name" value="ZF_CR"/>
    <property type="match status" value="1"/>
</dbReference>
<keyword id="KW-0143">Chaperone</keyword>
<keyword id="KW-0963">Cytoplasm</keyword>
<keyword id="KW-0235">DNA replication</keyword>
<keyword id="KW-0479">Metal-binding</keyword>
<keyword id="KW-1185">Reference proteome</keyword>
<keyword id="KW-0677">Repeat</keyword>
<keyword id="KW-0346">Stress response</keyword>
<keyword id="KW-0862">Zinc</keyword>
<keyword id="KW-0863">Zinc-finger</keyword>